<name>RS16_CHRVO</name>
<proteinExistence type="inferred from homology"/>
<organism>
    <name type="scientific">Chromobacterium violaceum (strain ATCC 12472 / DSM 30191 / JCM 1249 / CCUG 213 / NBRC 12614 / NCIMB 9131 / NCTC 9757 / MK)</name>
    <dbReference type="NCBI Taxonomy" id="243365"/>
    <lineage>
        <taxon>Bacteria</taxon>
        <taxon>Pseudomonadati</taxon>
        <taxon>Pseudomonadota</taxon>
        <taxon>Betaproteobacteria</taxon>
        <taxon>Neisseriales</taxon>
        <taxon>Chromobacteriaceae</taxon>
        <taxon>Chromobacterium</taxon>
    </lineage>
</organism>
<dbReference type="EMBL" id="AE016825">
    <property type="protein sequence ID" value="AAQ61337.1"/>
    <property type="molecule type" value="Genomic_DNA"/>
</dbReference>
<dbReference type="RefSeq" id="WP_011137222.1">
    <property type="nucleotide sequence ID" value="NC_005085.1"/>
</dbReference>
<dbReference type="SMR" id="Q7NRV5"/>
<dbReference type="STRING" id="243365.CV_3675"/>
<dbReference type="GeneID" id="97480634"/>
<dbReference type="KEGG" id="cvi:CV_3675"/>
<dbReference type="eggNOG" id="COG0228">
    <property type="taxonomic scope" value="Bacteria"/>
</dbReference>
<dbReference type="HOGENOM" id="CLU_100590_5_1_4"/>
<dbReference type="OrthoDB" id="9807878at2"/>
<dbReference type="Proteomes" id="UP000001424">
    <property type="component" value="Chromosome"/>
</dbReference>
<dbReference type="GO" id="GO:0005737">
    <property type="term" value="C:cytoplasm"/>
    <property type="evidence" value="ECO:0007669"/>
    <property type="project" value="UniProtKB-ARBA"/>
</dbReference>
<dbReference type="GO" id="GO:0015935">
    <property type="term" value="C:small ribosomal subunit"/>
    <property type="evidence" value="ECO:0007669"/>
    <property type="project" value="TreeGrafter"/>
</dbReference>
<dbReference type="GO" id="GO:0003735">
    <property type="term" value="F:structural constituent of ribosome"/>
    <property type="evidence" value="ECO:0007669"/>
    <property type="project" value="InterPro"/>
</dbReference>
<dbReference type="GO" id="GO:0006412">
    <property type="term" value="P:translation"/>
    <property type="evidence" value="ECO:0007669"/>
    <property type="project" value="UniProtKB-UniRule"/>
</dbReference>
<dbReference type="FunFam" id="3.30.1320.10:FF:000001">
    <property type="entry name" value="30S ribosomal protein S16"/>
    <property type="match status" value="1"/>
</dbReference>
<dbReference type="Gene3D" id="3.30.1320.10">
    <property type="match status" value="1"/>
</dbReference>
<dbReference type="HAMAP" id="MF_00385">
    <property type="entry name" value="Ribosomal_bS16"/>
    <property type="match status" value="1"/>
</dbReference>
<dbReference type="InterPro" id="IPR000307">
    <property type="entry name" value="Ribosomal_bS16"/>
</dbReference>
<dbReference type="InterPro" id="IPR020592">
    <property type="entry name" value="Ribosomal_bS16_CS"/>
</dbReference>
<dbReference type="InterPro" id="IPR023803">
    <property type="entry name" value="Ribosomal_bS16_dom_sf"/>
</dbReference>
<dbReference type="NCBIfam" id="TIGR00002">
    <property type="entry name" value="S16"/>
    <property type="match status" value="1"/>
</dbReference>
<dbReference type="PANTHER" id="PTHR12919">
    <property type="entry name" value="30S RIBOSOMAL PROTEIN S16"/>
    <property type="match status" value="1"/>
</dbReference>
<dbReference type="PANTHER" id="PTHR12919:SF20">
    <property type="entry name" value="SMALL RIBOSOMAL SUBUNIT PROTEIN BS16M"/>
    <property type="match status" value="1"/>
</dbReference>
<dbReference type="Pfam" id="PF00886">
    <property type="entry name" value="Ribosomal_S16"/>
    <property type="match status" value="1"/>
</dbReference>
<dbReference type="SUPFAM" id="SSF54565">
    <property type="entry name" value="Ribosomal protein S16"/>
    <property type="match status" value="1"/>
</dbReference>
<dbReference type="PROSITE" id="PS00732">
    <property type="entry name" value="RIBOSOMAL_S16"/>
    <property type="match status" value="1"/>
</dbReference>
<evidence type="ECO:0000255" key="1">
    <source>
        <dbReference type="HAMAP-Rule" id="MF_00385"/>
    </source>
</evidence>
<evidence type="ECO:0000305" key="2"/>
<protein>
    <recommendedName>
        <fullName evidence="1">Small ribosomal subunit protein bS16</fullName>
    </recommendedName>
    <alternativeName>
        <fullName evidence="2">30S ribosomal protein S16</fullName>
    </alternativeName>
</protein>
<accession>Q7NRV5</accession>
<keyword id="KW-1185">Reference proteome</keyword>
<keyword id="KW-0687">Ribonucleoprotein</keyword>
<keyword id="KW-0689">Ribosomal protein</keyword>
<gene>
    <name evidence="1" type="primary">rpsP</name>
    <name type="ordered locus">CV_3675</name>
</gene>
<sequence>MVVIRLARGGAKNRPFYNIVVTDSRNRRDGRFIERVGFYNPVANEKQERVRFTMDRLNYWVGVGAQLSDSVAKLLKEQKVVAA</sequence>
<feature type="chain" id="PRO_0000167175" description="Small ribosomal subunit protein bS16">
    <location>
        <begin position="1"/>
        <end position="83"/>
    </location>
</feature>
<reference key="1">
    <citation type="journal article" date="2003" name="Proc. Natl. Acad. Sci. U.S.A.">
        <title>The complete genome sequence of Chromobacterium violaceum reveals remarkable and exploitable bacterial adaptability.</title>
        <authorList>
            <person name="Vasconcelos A.T.R."/>
            <person name="de Almeida D.F."/>
            <person name="Hungria M."/>
            <person name="Guimaraes C.T."/>
            <person name="Antonio R.V."/>
            <person name="Almeida F.C."/>
            <person name="de Almeida L.G.P."/>
            <person name="de Almeida R."/>
            <person name="Alves-Gomes J.A."/>
            <person name="Andrade E.M."/>
            <person name="Araripe J."/>
            <person name="de Araujo M.F.F."/>
            <person name="Astolfi-Filho S."/>
            <person name="Azevedo V."/>
            <person name="Baptista A.J."/>
            <person name="Bataus L.A.M."/>
            <person name="Batista J.S."/>
            <person name="Belo A."/>
            <person name="van den Berg C."/>
            <person name="Bogo M."/>
            <person name="Bonatto S."/>
            <person name="Bordignon J."/>
            <person name="Brigido M.M."/>
            <person name="Brito C.A."/>
            <person name="Brocchi M."/>
            <person name="Burity H.A."/>
            <person name="Camargo A.A."/>
            <person name="Cardoso D.D.P."/>
            <person name="Carneiro N.P."/>
            <person name="Carraro D.M."/>
            <person name="Carvalho C.M.B."/>
            <person name="Cascardo J.C.M."/>
            <person name="Cavada B.S."/>
            <person name="Chueire L.M.O."/>
            <person name="Creczynski-Pasa T.B."/>
            <person name="Cunha-Junior N.C."/>
            <person name="Fagundes N."/>
            <person name="Falcao C.L."/>
            <person name="Fantinatti F."/>
            <person name="Farias I.P."/>
            <person name="Felipe M.S.S."/>
            <person name="Ferrari L.P."/>
            <person name="Ferro J.A."/>
            <person name="Ferro M.I.T."/>
            <person name="Franco G.R."/>
            <person name="Freitas N.S.A."/>
            <person name="Furlan L.R."/>
            <person name="Gazzinelli R.T."/>
            <person name="Gomes E.A."/>
            <person name="Goncalves P.R."/>
            <person name="Grangeiro T.B."/>
            <person name="Grattapaglia D."/>
            <person name="Grisard E.C."/>
            <person name="Hanna E.S."/>
            <person name="Jardim S.N."/>
            <person name="Laurino J."/>
            <person name="Leoi L.C.T."/>
            <person name="Lima L.F.A."/>
            <person name="Loureiro M.F."/>
            <person name="Lyra M.C.C.P."/>
            <person name="Madeira H.M.F."/>
            <person name="Manfio G.P."/>
            <person name="Maranhao A.Q."/>
            <person name="Martins W.S."/>
            <person name="di Mauro S.M.Z."/>
            <person name="de Medeiros S.R.B."/>
            <person name="Meissner R.V."/>
            <person name="Moreira M.A.M."/>
            <person name="Nascimento F.F."/>
            <person name="Nicolas M.F."/>
            <person name="Oliveira J.G."/>
            <person name="Oliveira S.C."/>
            <person name="Paixao R.F.C."/>
            <person name="Parente J.A."/>
            <person name="Pedrosa F.O."/>
            <person name="Pena S.D.J."/>
            <person name="Pereira J.O."/>
            <person name="Pereira M."/>
            <person name="Pinto L.S.R.C."/>
            <person name="Pinto L.S."/>
            <person name="Porto J.I.R."/>
            <person name="Potrich D.P."/>
            <person name="Ramalho-Neto C.E."/>
            <person name="Reis A.M.M."/>
            <person name="Rigo L.U."/>
            <person name="Rondinelli E."/>
            <person name="Santos E.B.P."/>
            <person name="Santos F.R."/>
            <person name="Schneider M.P.C."/>
            <person name="Seuanez H.N."/>
            <person name="Silva A.M.R."/>
            <person name="da Silva A.L.C."/>
            <person name="Silva D.W."/>
            <person name="Silva R."/>
            <person name="Simoes I.C."/>
            <person name="Simon D."/>
            <person name="Soares C.M.A."/>
            <person name="Soares R.B.A."/>
            <person name="Souza E.M."/>
            <person name="Souza K.R.L."/>
            <person name="Souza R.C."/>
            <person name="Steffens M.B.R."/>
            <person name="Steindel M."/>
            <person name="Teixeira S.R."/>
            <person name="Urmenyi T."/>
            <person name="Vettore A."/>
            <person name="Wassem R."/>
            <person name="Zaha A."/>
            <person name="Simpson A.J.G."/>
        </authorList>
    </citation>
    <scope>NUCLEOTIDE SEQUENCE [LARGE SCALE GENOMIC DNA]</scope>
    <source>
        <strain>ATCC 12472 / DSM 30191 / JCM 1249 / CCUG 213 / NBRC 12614 / NCIMB 9131 / NCTC 9757 / MK</strain>
    </source>
</reference>
<comment type="similarity">
    <text evidence="1">Belongs to the bacterial ribosomal protein bS16 family.</text>
</comment>